<name>ARGI_COCP7</name>
<sequence>MTSPSTIKQKFIAKGHQLGVVAVGFSDGQPNQGVDPSGLIEAGLLDQLRDDLEYDIRHDGQVHTYAEFVPEHDPNHRGMKKPRTVSAATQQLSRQVYEHAREGRLVLTLGGDHSIAIGTISGTAKAIRERLGREMAVIWVDAHADINRPEDSDSGNIHGMPLAFLTGLAKDDNEDMFGWLQPDNLISPRKLVYIGLRDVDRAEKRLLREHGIKAFSMHDIDKYGIGRVVEMALAHIGQDTPIHLSFDVDALDPQWAPSTGTPVRGGLTLREGDFIAESIHETGSLVAMDLVEVNPTLETLGASETIRAGCSLVRSALGDTLL</sequence>
<protein>
    <recommendedName>
        <fullName>Arginase</fullName>
        <ecNumber evidence="2">3.5.3.1</ecNumber>
    </recommendedName>
</protein>
<reference key="1">
    <citation type="journal article" date="1995" name="Gene">
        <title>Isolation and characterization of the arginase-encoding gene (arg) from Coccidioides immitis.</title>
        <authorList>
            <person name="Pan S."/>
            <person name="Zhang M."/>
            <person name="Cole G.T."/>
        </authorList>
    </citation>
    <scope>NUCLEOTIDE SEQUENCE [GENOMIC DNA]</scope>
    <source>
        <strain>C735</strain>
    </source>
</reference>
<reference key="2">
    <citation type="journal article" date="2009" name="Genome Res.">
        <title>Comparative genomic analyses of the human fungal pathogens Coccidioides and their relatives.</title>
        <authorList>
            <person name="Sharpton T.J."/>
            <person name="Stajich J.E."/>
            <person name="Rounsley S.D."/>
            <person name="Gardner M.J."/>
            <person name="Wortman J.R."/>
            <person name="Jordar V.S."/>
            <person name="Maiti R."/>
            <person name="Kodira C.D."/>
            <person name="Neafsey D.E."/>
            <person name="Zeng Q."/>
            <person name="Hung C.-Y."/>
            <person name="McMahan C."/>
            <person name="Muszewska A."/>
            <person name="Grynberg M."/>
            <person name="Mandel M.A."/>
            <person name="Kellner E.M."/>
            <person name="Barker B.M."/>
            <person name="Galgiani J.N."/>
            <person name="Orbach M.J."/>
            <person name="Kirkland T.N."/>
            <person name="Cole G.T."/>
            <person name="Henn M.R."/>
            <person name="Birren B.W."/>
            <person name="Taylor J.W."/>
        </authorList>
    </citation>
    <scope>NUCLEOTIDE SEQUENCE [LARGE SCALE GENOMIC DNA]</scope>
    <source>
        <strain>C735</strain>
    </source>
</reference>
<proteinExistence type="inferred from homology"/>
<organism>
    <name type="scientific">Coccidioides posadasii (strain C735)</name>
    <name type="common">Valley fever fungus</name>
    <dbReference type="NCBI Taxonomy" id="222929"/>
    <lineage>
        <taxon>Eukaryota</taxon>
        <taxon>Fungi</taxon>
        <taxon>Dikarya</taxon>
        <taxon>Ascomycota</taxon>
        <taxon>Pezizomycotina</taxon>
        <taxon>Eurotiomycetes</taxon>
        <taxon>Eurotiomycetidae</taxon>
        <taxon>Onygenales</taxon>
        <taxon>Onygenaceae</taxon>
        <taxon>Coccidioides</taxon>
    </lineage>
</organism>
<comment type="catalytic activity">
    <reaction evidence="2">
        <text>L-arginine + H2O = urea + L-ornithine</text>
        <dbReference type="Rhea" id="RHEA:20569"/>
        <dbReference type="ChEBI" id="CHEBI:15377"/>
        <dbReference type="ChEBI" id="CHEBI:16199"/>
        <dbReference type="ChEBI" id="CHEBI:32682"/>
        <dbReference type="ChEBI" id="CHEBI:46911"/>
        <dbReference type="EC" id="3.5.3.1"/>
    </reaction>
</comment>
<comment type="cofactor">
    <cofactor evidence="4">
        <name>Mn(2+)</name>
        <dbReference type="ChEBI" id="CHEBI:29035"/>
    </cofactor>
    <text evidence="4">Binds 2 manganese ions per subunit.</text>
</comment>
<comment type="pathway">
    <text evidence="2">Nitrogen metabolism; urea cycle; L-ornithine and urea from L-arginine: step 1/1.</text>
</comment>
<comment type="subunit">
    <text evidence="1">Homotrimer.</text>
</comment>
<comment type="similarity">
    <text evidence="4">Belongs to the arginase family.</text>
</comment>
<evidence type="ECO:0000250" key="1"/>
<evidence type="ECO:0000250" key="2">
    <source>
        <dbReference type="UniProtKB" id="P05089"/>
    </source>
</evidence>
<evidence type="ECO:0000250" key="3">
    <source>
        <dbReference type="UniProtKB" id="P53608"/>
    </source>
</evidence>
<evidence type="ECO:0000255" key="4">
    <source>
        <dbReference type="PROSITE-ProRule" id="PRU00742"/>
    </source>
</evidence>
<evidence type="ECO:0000305" key="5"/>
<dbReference type="EC" id="3.5.3.1" evidence="2"/>
<dbReference type="EMBL" id="L36550">
    <property type="protein sequence ID" value="AAA65960.1"/>
    <property type="molecule type" value="Genomic_DNA"/>
</dbReference>
<dbReference type="EMBL" id="ACFW01000030">
    <property type="protein sequence ID" value="EER26426.1"/>
    <property type="molecule type" value="Genomic_DNA"/>
</dbReference>
<dbReference type="PIR" id="JC4033">
    <property type="entry name" value="JC4033"/>
</dbReference>
<dbReference type="SMR" id="P40906"/>
<dbReference type="KEGG" id="cpw:9694054"/>
<dbReference type="VEuPathDB" id="FungiDB:CPC735_005980"/>
<dbReference type="HOGENOM" id="CLU_039478_6_1_1"/>
<dbReference type="OrthoDB" id="9992747at2759"/>
<dbReference type="UniPathway" id="UPA00158">
    <property type="reaction ID" value="UER00270"/>
</dbReference>
<dbReference type="Proteomes" id="UP000009084">
    <property type="component" value="Unassembled WGS sequence"/>
</dbReference>
<dbReference type="GO" id="GO:0005829">
    <property type="term" value="C:cytosol"/>
    <property type="evidence" value="ECO:0007669"/>
    <property type="project" value="TreeGrafter"/>
</dbReference>
<dbReference type="GO" id="GO:0005634">
    <property type="term" value="C:nucleus"/>
    <property type="evidence" value="ECO:0007669"/>
    <property type="project" value="TreeGrafter"/>
</dbReference>
<dbReference type="GO" id="GO:0004053">
    <property type="term" value="F:arginase activity"/>
    <property type="evidence" value="ECO:0007669"/>
    <property type="project" value="UniProtKB-EC"/>
</dbReference>
<dbReference type="GO" id="GO:0030145">
    <property type="term" value="F:manganese ion binding"/>
    <property type="evidence" value="ECO:0007669"/>
    <property type="project" value="TreeGrafter"/>
</dbReference>
<dbReference type="GO" id="GO:0019547">
    <property type="term" value="P:arginine catabolic process to ornithine"/>
    <property type="evidence" value="ECO:0007669"/>
    <property type="project" value="TreeGrafter"/>
</dbReference>
<dbReference type="GO" id="GO:0000050">
    <property type="term" value="P:urea cycle"/>
    <property type="evidence" value="ECO:0007669"/>
    <property type="project" value="UniProtKB-UniPathway"/>
</dbReference>
<dbReference type="CDD" id="cd09989">
    <property type="entry name" value="Arginase"/>
    <property type="match status" value="1"/>
</dbReference>
<dbReference type="FunFam" id="3.40.800.10:FF:000012">
    <property type="entry name" value="Arginase"/>
    <property type="match status" value="1"/>
</dbReference>
<dbReference type="Gene3D" id="3.40.800.10">
    <property type="entry name" value="Ureohydrolase domain"/>
    <property type="match status" value="1"/>
</dbReference>
<dbReference type="InterPro" id="IPR014033">
    <property type="entry name" value="Arginase"/>
</dbReference>
<dbReference type="InterPro" id="IPR006035">
    <property type="entry name" value="Ureohydrolase"/>
</dbReference>
<dbReference type="InterPro" id="IPR023696">
    <property type="entry name" value="Ureohydrolase_dom_sf"/>
</dbReference>
<dbReference type="InterPro" id="IPR020855">
    <property type="entry name" value="Ureohydrolase_Mn_BS"/>
</dbReference>
<dbReference type="NCBIfam" id="TIGR01229">
    <property type="entry name" value="rocF_arginase"/>
    <property type="match status" value="1"/>
</dbReference>
<dbReference type="PANTHER" id="PTHR43782">
    <property type="entry name" value="ARGINASE"/>
    <property type="match status" value="1"/>
</dbReference>
<dbReference type="PANTHER" id="PTHR43782:SF3">
    <property type="entry name" value="ARGINASE"/>
    <property type="match status" value="1"/>
</dbReference>
<dbReference type="Pfam" id="PF00491">
    <property type="entry name" value="Arginase"/>
    <property type="match status" value="1"/>
</dbReference>
<dbReference type="PRINTS" id="PR00116">
    <property type="entry name" value="ARGINASE"/>
</dbReference>
<dbReference type="SUPFAM" id="SSF52768">
    <property type="entry name" value="Arginase/deacetylase"/>
    <property type="match status" value="1"/>
</dbReference>
<dbReference type="PROSITE" id="PS01053">
    <property type="entry name" value="ARGINASE_1"/>
    <property type="match status" value="1"/>
</dbReference>
<dbReference type="PROSITE" id="PS51409">
    <property type="entry name" value="ARGINASE_2"/>
    <property type="match status" value="1"/>
</dbReference>
<accession>P40906</accession>
<accession>C5P9L4</accession>
<gene>
    <name type="primary">ARG</name>
    <name type="ORF">CPC735_005980</name>
</gene>
<keyword id="KW-0056">Arginine metabolism</keyword>
<keyword id="KW-0378">Hydrolase</keyword>
<keyword id="KW-0464">Manganese</keyword>
<keyword id="KW-0479">Metal-binding</keyword>
<feature type="chain" id="PRO_0000173707" description="Arginase">
    <location>
        <begin position="1"/>
        <end position="322"/>
    </location>
</feature>
<feature type="binding site" evidence="4">
    <location>
        <position position="113"/>
    </location>
    <ligand>
        <name>Mn(2+)</name>
        <dbReference type="ChEBI" id="CHEBI:29035"/>
        <label>1</label>
    </ligand>
</feature>
<feature type="binding site" evidence="4">
    <location>
        <position position="141"/>
    </location>
    <ligand>
        <name>Mn(2+)</name>
        <dbReference type="ChEBI" id="CHEBI:29035"/>
        <label>1</label>
    </ligand>
</feature>
<feature type="binding site" evidence="4">
    <location>
        <position position="141"/>
    </location>
    <ligand>
        <name>Mn(2+)</name>
        <dbReference type="ChEBI" id="CHEBI:29035"/>
        <label>2</label>
    </ligand>
</feature>
<feature type="binding site" evidence="3">
    <location>
        <begin position="143"/>
        <end position="147"/>
    </location>
    <ligand>
        <name>substrate</name>
    </ligand>
</feature>
<feature type="binding site" evidence="4">
    <location>
        <position position="143"/>
    </location>
    <ligand>
        <name>Mn(2+)</name>
        <dbReference type="ChEBI" id="CHEBI:29035"/>
        <label>2</label>
    </ligand>
</feature>
<feature type="binding site" evidence="4">
    <location>
        <position position="145"/>
    </location>
    <ligand>
        <name>Mn(2+)</name>
        <dbReference type="ChEBI" id="CHEBI:29035"/>
        <label>1</label>
    </ligand>
</feature>
<feature type="binding site" evidence="3">
    <location>
        <begin position="154"/>
        <end position="156"/>
    </location>
    <ligand>
        <name>substrate</name>
    </ligand>
</feature>
<feature type="binding site" evidence="3">
    <location>
        <position position="200"/>
    </location>
    <ligand>
        <name>substrate</name>
    </ligand>
</feature>
<feature type="binding site" evidence="4">
    <location>
        <position position="247"/>
    </location>
    <ligand>
        <name>Mn(2+)</name>
        <dbReference type="ChEBI" id="CHEBI:29035"/>
        <label>1</label>
    </ligand>
</feature>
<feature type="binding site" evidence="4">
    <location>
        <position position="247"/>
    </location>
    <ligand>
        <name>Mn(2+)</name>
        <dbReference type="ChEBI" id="CHEBI:29035"/>
        <label>2</label>
    </ligand>
</feature>
<feature type="binding site" evidence="4">
    <location>
        <position position="249"/>
    </location>
    <ligand>
        <name>Mn(2+)</name>
        <dbReference type="ChEBI" id="CHEBI:29035"/>
        <label>2</label>
    </ligand>
</feature>
<feature type="binding site" evidence="3">
    <location>
        <position position="261"/>
    </location>
    <ligand>
        <name>substrate</name>
    </ligand>
</feature>
<feature type="binding site" evidence="3">
    <location>
        <position position="292"/>
    </location>
    <ligand>
        <name>substrate</name>
    </ligand>
</feature>
<feature type="sequence conflict" description="In Ref. 1; AAA65960." evidence="5" ref="1">
    <original>D</original>
    <variation>V</variation>
    <location>
        <position position="153"/>
    </location>
</feature>